<name>CTPAL_STAAB</name>
<dbReference type="EC" id="3.4.21.-"/>
<dbReference type="EMBL" id="AJ938182">
    <property type="protein sequence ID" value="CAI80964.1"/>
    <property type="molecule type" value="Genomic_DNA"/>
</dbReference>
<dbReference type="RefSeq" id="WP_000342136.1">
    <property type="nucleotide sequence ID" value="NC_007622.1"/>
</dbReference>
<dbReference type="SMR" id="Q2YXZ9"/>
<dbReference type="KEGG" id="sab:SAB1275c"/>
<dbReference type="HOGENOM" id="CLU_017295_3_0_9"/>
<dbReference type="GO" id="GO:0030288">
    <property type="term" value="C:outer membrane-bounded periplasmic space"/>
    <property type="evidence" value="ECO:0007669"/>
    <property type="project" value="TreeGrafter"/>
</dbReference>
<dbReference type="GO" id="GO:0005886">
    <property type="term" value="C:plasma membrane"/>
    <property type="evidence" value="ECO:0007669"/>
    <property type="project" value="UniProtKB-SubCell"/>
</dbReference>
<dbReference type="GO" id="GO:0004175">
    <property type="term" value="F:endopeptidase activity"/>
    <property type="evidence" value="ECO:0007669"/>
    <property type="project" value="TreeGrafter"/>
</dbReference>
<dbReference type="GO" id="GO:0008236">
    <property type="term" value="F:serine-type peptidase activity"/>
    <property type="evidence" value="ECO:0007669"/>
    <property type="project" value="UniProtKB-KW"/>
</dbReference>
<dbReference type="GO" id="GO:0006508">
    <property type="term" value="P:proteolysis"/>
    <property type="evidence" value="ECO:0007669"/>
    <property type="project" value="UniProtKB-KW"/>
</dbReference>
<dbReference type="GO" id="GO:0007165">
    <property type="term" value="P:signal transduction"/>
    <property type="evidence" value="ECO:0007669"/>
    <property type="project" value="TreeGrafter"/>
</dbReference>
<dbReference type="CDD" id="cd06782">
    <property type="entry name" value="cpPDZ_CPP-like"/>
    <property type="match status" value="1"/>
</dbReference>
<dbReference type="CDD" id="cd07560">
    <property type="entry name" value="Peptidase_S41_CPP"/>
    <property type="match status" value="1"/>
</dbReference>
<dbReference type="FunFam" id="2.30.42.10:FF:000063">
    <property type="entry name" value="Peptidase, S41 family"/>
    <property type="match status" value="1"/>
</dbReference>
<dbReference type="FunFam" id="3.30.750.44:FF:000001">
    <property type="entry name" value="S41 family peptidase"/>
    <property type="match status" value="1"/>
</dbReference>
<dbReference type="Gene3D" id="2.30.42.10">
    <property type="match status" value="1"/>
</dbReference>
<dbReference type="Gene3D" id="3.30.750.44">
    <property type="match status" value="1"/>
</dbReference>
<dbReference type="Gene3D" id="3.90.226.10">
    <property type="entry name" value="2-enoyl-CoA Hydratase, Chain A, domain 1"/>
    <property type="match status" value="1"/>
</dbReference>
<dbReference type="Gene3D" id="1.10.101.10">
    <property type="entry name" value="PGBD-like superfamily/PGBD"/>
    <property type="match status" value="1"/>
</dbReference>
<dbReference type="InterPro" id="IPR029045">
    <property type="entry name" value="ClpP/crotonase-like_dom_sf"/>
</dbReference>
<dbReference type="InterPro" id="IPR055210">
    <property type="entry name" value="CtpA/B_N"/>
</dbReference>
<dbReference type="InterPro" id="IPR001478">
    <property type="entry name" value="PDZ"/>
</dbReference>
<dbReference type="InterPro" id="IPR041489">
    <property type="entry name" value="PDZ_6"/>
</dbReference>
<dbReference type="InterPro" id="IPR036034">
    <property type="entry name" value="PDZ_sf"/>
</dbReference>
<dbReference type="InterPro" id="IPR004447">
    <property type="entry name" value="Peptidase_S41A"/>
</dbReference>
<dbReference type="InterPro" id="IPR002477">
    <property type="entry name" value="Peptidoglycan-bd-like"/>
</dbReference>
<dbReference type="InterPro" id="IPR036365">
    <property type="entry name" value="PGBD-like_sf"/>
</dbReference>
<dbReference type="InterPro" id="IPR036366">
    <property type="entry name" value="PGBDSf"/>
</dbReference>
<dbReference type="InterPro" id="IPR005151">
    <property type="entry name" value="Tail-specific_protease"/>
</dbReference>
<dbReference type="NCBIfam" id="TIGR00225">
    <property type="entry name" value="prc"/>
    <property type="match status" value="1"/>
</dbReference>
<dbReference type="PANTHER" id="PTHR32060:SF30">
    <property type="entry name" value="CARBOXY-TERMINAL PROCESSING PROTEASE CTPA"/>
    <property type="match status" value="1"/>
</dbReference>
<dbReference type="PANTHER" id="PTHR32060">
    <property type="entry name" value="TAIL-SPECIFIC PROTEASE"/>
    <property type="match status" value="1"/>
</dbReference>
<dbReference type="Pfam" id="PF22694">
    <property type="entry name" value="CtpB_N-like"/>
    <property type="match status" value="1"/>
</dbReference>
<dbReference type="Pfam" id="PF17820">
    <property type="entry name" value="PDZ_6"/>
    <property type="match status" value="1"/>
</dbReference>
<dbReference type="Pfam" id="PF03572">
    <property type="entry name" value="Peptidase_S41"/>
    <property type="match status" value="1"/>
</dbReference>
<dbReference type="Pfam" id="PF01471">
    <property type="entry name" value="PG_binding_1"/>
    <property type="match status" value="1"/>
</dbReference>
<dbReference type="SMART" id="SM00228">
    <property type="entry name" value="PDZ"/>
    <property type="match status" value="1"/>
</dbReference>
<dbReference type="SMART" id="SM00245">
    <property type="entry name" value="TSPc"/>
    <property type="match status" value="1"/>
</dbReference>
<dbReference type="SUPFAM" id="SSF52096">
    <property type="entry name" value="ClpP/crotonase"/>
    <property type="match status" value="1"/>
</dbReference>
<dbReference type="SUPFAM" id="SSF50156">
    <property type="entry name" value="PDZ domain-like"/>
    <property type="match status" value="1"/>
</dbReference>
<dbReference type="SUPFAM" id="SSF47090">
    <property type="entry name" value="PGBD-like"/>
    <property type="match status" value="1"/>
</dbReference>
<dbReference type="PROSITE" id="PS50106">
    <property type="entry name" value="PDZ"/>
    <property type="match status" value="1"/>
</dbReference>
<sequence>MDDKQHTSSSDDERAEIATSNQDQQTNSSKRVHLKRWQFISILIGTILITAVITVVAYIFINQKINGLNKTDQANLNKIENVYKILNSDYYKKQSSDKLSKAAIDGMVKELKDPYSEYLTKEQTKSFNEGVSGDFVGIGAEMQKKNDQIMVTSPMKGSPAERAGIRPKDVITKVNGKSIKGKALDEVVKDVRGKENTEVTLTVQRGSEEKDVKIKREKIHVKSVEYKKKGKVGVITINKFQNDTSGELKDAVLKAHKDGLKKIVLDLRNNPGGLLDEAVKMANIFIDKGKTVVKLEKGKDTEAIQTSNDALKEAKDMDISILVNEGSASASEVFTGALKDYNKAKVYGSKTFGKGVVQTTREFKDGSLLKYTEMKWLTPDGHYIHGKGIKPDVTIDTPKYQSLNVIPNTKTFKVGDDDKNIKTIKIGLSALGYKVDNESTQFDQALENQVKAFQQTNKLEVTGEFNKETNNKFTELLVEKANKHDDVLDKLINILK</sequence>
<protein>
    <recommendedName>
        <fullName>Probable CtpA-like serine protease</fullName>
        <ecNumber>3.4.21.-</ecNumber>
    </recommendedName>
</protein>
<feature type="chain" id="PRO_0000233188" description="Probable CtpA-like serine protease">
    <location>
        <begin position="1"/>
        <end position="496"/>
    </location>
</feature>
<feature type="transmembrane region" description="Helical" evidence="2">
    <location>
        <begin position="39"/>
        <end position="59"/>
    </location>
</feature>
<feature type="domain" description="PDZ" evidence="3">
    <location>
        <begin position="124"/>
        <end position="206"/>
    </location>
</feature>
<feature type="region of interest" description="Disordered" evidence="4">
    <location>
        <begin position="1"/>
        <end position="27"/>
    </location>
</feature>
<feature type="compositionally biased region" description="Basic and acidic residues" evidence="4">
    <location>
        <begin position="1"/>
        <end position="16"/>
    </location>
</feature>
<feature type="compositionally biased region" description="Polar residues" evidence="4">
    <location>
        <begin position="18"/>
        <end position="27"/>
    </location>
</feature>
<feature type="active site" description="Charge relay system" evidence="1">
    <location>
        <position position="329"/>
    </location>
</feature>
<feature type="active site" description="Charge relay system" evidence="1">
    <location>
        <position position="340"/>
    </location>
</feature>
<feature type="active site" description="Charge relay system" evidence="1">
    <location>
        <position position="354"/>
    </location>
</feature>
<keyword id="KW-1003">Cell membrane</keyword>
<keyword id="KW-0378">Hydrolase</keyword>
<keyword id="KW-0472">Membrane</keyword>
<keyword id="KW-0645">Protease</keyword>
<keyword id="KW-0720">Serine protease</keyword>
<keyword id="KW-0812">Transmembrane</keyword>
<keyword id="KW-1133">Transmembrane helix</keyword>
<reference key="1">
    <citation type="journal article" date="2007" name="PLoS ONE">
        <title>Molecular correlates of host specialization in Staphylococcus aureus.</title>
        <authorList>
            <person name="Herron-Olson L."/>
            <person name="Fitzgerald J.R."/>
            <person name="Musser J.M."/>
            <person name="Kapur V."/>
        </authorList>
    </citation>
    <scope>NUCLEOTIDE SEQUENCE [LARGE SCALE GENOMIC DNA]</scope>
    <source>
        <strain>bovine RF122 / ET3-1</strain>
    </source>
</reference>
<evidence type="ECO:0000250" key="1"/>
<evidence type="ECO:0000255" key="2"/>
<evidence type="ECO:0000255" key="3">
    <source>
        <dbReference type="PROSITE-ProRule" id="PRU00143"/>
    </source>
</evidence>
<evidence type="ECO:0000256" key="4">
    <source>
        <dbReference type="SAM" id="MobiDB-lite"/>
    </source>
</evidence>
<evidence type="ECO:0000305" key="5"/>
<gene>
    <name type="ordered locus">SAB1275c</name>
</gene>
<comment type="subcellular location">
    <subcellularLocation>
        <location evidence="5">Cell membrane</location>
        <topology evidence="5">Single-pass membrane protein</topology>
    </subcellularLocation>
</comment>
<comment type="similarity">
    <text evidence="5">Belongs to the peptidase S41A family.</text>
</comment>
<accession>Q2YXZ9</accession>
<proteinExistence type="inferred from homology"/>
<organism>
    <name type="scientific">Staphylococcus aureus (strain bovine RF122 / ET3-1)</name>
    <dbReference type="NCBI Taxonomy" id="273036"/>
    <lineage>
        <taxon>Bacteria</taxon>
        <taxon>Bacillati</taxon>
        <taxon>Bacillota</taxon>
        <taxon>Bacilli</taxon>
        <taxon>Bacillales</taxon>
        <taxon>Staphylococcaceae</taxon>
        <taxon>Staphylococcus</taxon>
    </lineage>
</organism>